<reference key="1">
    <citation type="submission" date="2008-10" db="EMBL/GenBank/DDBJ databases">
        <title>Genome sequence of Bacillus cereus AH820.</title>
        <authorList>
            <person name="Dodson R.J."/>
            <person name="Durkin A.S."/>
            <person name="Rosovitz M.J."/>
            <person name="Rasko D.A."/>
            <person name="Hoffmaster A."/>
            <person name="Ravel J."/>
            <person name="Sutton G."/>
        </authorList>
    </citation>
    <scope>NUCLEOTIDE SEQUENCE [LARGE SCALE GENOMIC DNA]</scope>
    <source>
        <strain>AH820</strain>
    </source>
</reference>
<keyword id="KW-0021">Allosteric enzyme</keyword>
<keyword id="KW-0328">Glycosyltransferase</keyword>
<keyword id="KW-0342">GTP-binding</keyword>
<keyword id="KW-0460">Magnesium</keyword>
<keyword id="KW-0547">Nucleotide-binding</keyword>
<keyword id="KW-0808">Transferase</keyword>
<gene>
    <name evidence="1" type="primary">upp</name>
    <name type="ordered locus">BCAH820_5406</name>
</gene>
<protein>
    <recommendedName>
        <fullName evidence="1">Uracil phosphoribosyltransferase</fullName>
        <ecNumber evidence="1">2.4.2.9</ecNumber>
    </recommendedName>
    <alternativeName>
        <fullName evidence="1">UMP pyrophosphorylase</fullName>
    </alternativeName>
    <alternativeName>
        <fullName evidence="1">UPRTase</fullName>
    </alternativeName>
</protein>
<evidence type="ECO:0000255" key="1">
    <source>
        <dbReference type="HAMAP-Rule" id="MF_01218"/>
    </source>
</evidence>
<comment type="function">
    <text evidence="1">Catalyzes the conversion of uracil and 5-phospho-alpha-D-ribose 1-diphosphate (PRPP) to UMP and diphosphate.</text>
</comment>
<comment type="catalytic activity">
    <reaction evidence="1">
        <text>UMP + diphosphate = 5-phospho-alpha-D-ribose 1-diphosphate + uracil</text>
        <dbReference type="Rhea" id="RHEA:13017"/>
        <dbReference type="ChEBI" id="CHEBI:17568"/>
        <dbReference type="ChEBI" id="CHEBI:33019"/>
        <dbReference type="ChEBI" id="CHEBI:57865"/>
        <dbReference type="ChEBI" id="CHEBI:58017"/>
        <dbReference type="EC" id="2.4.2.9"/>
    </reaction>
</comment>
<comment type="cofactor">
    <cofactor evidence="1">
        <name>Mg(2+)</name>
        <dbReference type="ChEBI" id="CHEBI:18420"/>
    </cofactor>
    <text evidence="1">Binds 1 Mg(2+) ion per subunit. The magnesium is bound as Mg-PRPP.</text>
</comment>
<comment type="activity regulation">
    <text evidence="1">Allosterically activated by GTP.</text>
</comment>
<comment type="pathway">
    <text evidence="1">Pyrimidine metabolism; UMP biosynthesis via salvage pathway; UMP from uracil: step 1/1.</text>
</comment>
<comment type="similarity">
    <text evidence="1">Belongs to the UPRTase family.</text>
</comment>
<name>UPP_BACC0</name>
<organism>
    <name type="scientific">Bacillus cereus (strain AH820)</name>
    <dbReference type="NCBI Taxonomy" id="405535"/>
    <lineage>
        <taxon>Bacteria</taxon>
        <taxon>Bacillati</taxon>
        <taxon>Bacillota</taxon>
        <taxon>Bacilli</taxon>
        <taxon>Bacillales</taxon>
        <taxon>Bacillaceae</taxon>
        <taxon>Bacillus</taxon>
        <taxon>Bacillus cereus group</taxon>
    </lineage>
</organism>
<sequence>MGKLYVFDHPLIQHKITYIRDKNTGTKDFRELVDEVASLMAFEITRDLPLKDIEIETPVSKATTKVIAGKKLGLIPILRAGLGMVDGILKLIPAAKVGHVGLYRDPKTLQPVEYYVKLPTDVEERDFIVLDPMLATGGSAAEAINSLKKRGAKQIKLMCIVAAPEGVKVVQEEHPDVDIYVAALDEKLNDHGYVVPGLGDAGDRLFGTK</sequence>
<proteinExistence type="inferred from homology"/>
<accession>B7JGP0</accession>
<feature type="chain" id="PRO_1000139093" description="Uracil phosphoribosyltransferase">
    <location>
        <begin position="1"/>
        <end position="209"/>
    </location>
</feature>
<feature type="binding site" evidence="1">
    <location>
        <position position="79"/>
    </location>
    <ligand>
        <name>5-phospho-alpha-D-ribose 1-diphosphate</name>
        <dbReference type="ChEBI" id="CHEBI:58017"/>
    </ligand>
</feature>
<feature type="binding site" evidence="1">
    <location>
        <position position="104"/>
    </location>
    <ligand>
        <name>5-phospho-alpha-D-ribose 1-diphosphate</name>
        <dbReference type="ChEBI" id="CHEBI:58017"/>
    </ligand>
</feature>
<feature type="binding site" evidence="1">
    <location>
        <begin position="131"/>
        <end position="139"/>
    </location>
    <ligand>
        <name>5-phospho-alpha-D-ribose 1-diphosphate</name>
        <dbReference type="ChEBI" id="CHEBI:58017"/>
    </ligand>
</feature>
<feature type="binding site" evidence="1">
    <location>
        <position position="194"/>
    </location>
    <ligand>
        <name>uracil</name>
        <dbReference type="ChEBI" id="CHEBI:17568"/>
    </ligand>
</feature>
<feature type="binding site" evidence="1">
    <location>
        <begin position="199"/>
        <end position="201"/>
    </location>
    <ligand>
        <name>uracil</name>
        <dbReference type="ChEBI" id="CHEBI:17568"/>
    </ligand>
</feature>
<feature type="binding site" evidence="1">
    <location>
        <position position="200"/>
    </location>
    <ligand>
        <name>5-phospho-alpha-D-ribose 1-diphosphate</name>
        <dbReference type="ChEBI" id="CHEBI:58017"/>
    </ligand>
</feature>
<dbReference type="EC" id="2.4.2.9" evidence="1"/>
<dbReference type="EMBL" id="CP001283">
    <property type="protein sequence ID" value="ACK91414.1"/>
    <property type="molecule type" value="Genomic_DNA"/>
</dbReference>
<dbReference type="RefSeq" id="WP_000517539.1">
    <property type="nucleotide sequence ID" value="NC_011773.1"/>
</dbReference>
<dbReference type="SMR" id="B7JGP0"/>
<dbReference type="GeneID" id="93005808"/>
<dbReference type="KEGG" id="bcu:BCAH820_5406"/>
<dbReference type="HOGENOM" id="CLU_067096_2_2_9"/>
<dbReference type="UniPathway" id="UPA00574">
    <property type="reaction ID" value="UER00636"/>
</dbReference>
<dbReference type="Proteomes" id="UP000001363">
    <property type="component" value="Chromosome"/>
</dbReference>
<dbReference type="GO" id="GO:0005525">
    <property type="term" value="F:GTP binding"/>
    <property type="evidence" value="ECO:0007669"/>
    <property type="project" value="UniProtKB-KW"/>
</dbReference>
<dbReference type="GO" id="GO:0000287">
    <property type="term" value="F:magnesium ion binding"/>
    <property type="evidence" value="ECO:0007669"/>
    <property type="project" value="UniProtKB-UniRule"/>
</dbReference>
<dbReference type="GO" id="GO:0004845">
    <property type="term" value="F:uracil phosphoribosyltransferase activity"/>
    <property type="evidence" value="ECO:0007669"/>
    <property type="project" value="UniProtKB-UniRule"/>
</dbReference>
<dbReference type="GO" id="GO:0044206">
    <property type="term" value="P:UMP salvage"/>
    <property type="evidence" value="ECO:0007669"/>
    <property type="project" value="UniProtKB-UniRule"/>
</dbReference>
<dbReference type="GO" id="GO:0006223">
    <property type="term" value="P:uracil salvage"/>
    <property type="evidence" value="ECO:0007669"/>
    <property type="project" value="InterPro"/>
</dbReference>
<dbReference type="CDD" id="cd06223">
    <property type="entry name" value="PRTases_typeI"/>
    <property type="match status" value="1"/>
</dbReference>
<dbReference type="FunFam" id="3.40.50.2020:FF:000003">
    <property type="entry name" value="Uracil phosphoribosyltransferase"/>
    <property type="match status" value="1"/>
</dbReference>
<dbReference type="Gene3D" id="3.40.50.2020">
    <property type="match status" value="1"/>
</dbReference>
<dbReference type="HAMAP" id="MF_01218_B">
    <property type="entry name" value="Upp_B"/>
    <property type="match status" value="1"/>
</dbReference>
<dbReference type="InterPro" id="IPR000836">
    <property type="entry name" value="PRibTrfase_dom"/>
</dbReference>
<dbReference type="InterPro" id="IPR029057">
    <property type="entry name" value="PRTase-like"/>
</dbReference>
<dbReference type="InterPro" id="IPR034332">
    <property type="entry name" value="Upp_B"/>
</dbReference>
<dbReference type="InterPro" id="IPR050054">
    <property type="entry name" value="UPRTase/APRTase"/>
</dbReference>
<dbReference type="InterPro" id="IPR005765">
    <property type="entry name" value="Ura_phspho_trans"/>
</dbReference>
<dbReference type="NCBIfam" id="NF001097">
    <property type="entry name" value="PRK00129.1"/>
    <property type="match status" value="1"/>
</dbReference>
<dbReference type="NCBIfam" id="TIGR01091">
    <property type="entry name" value="upp"/>
    <property type="match status" value="1"/>
</dbReference>
<dbReference type="PANTHER" id="PTHR32315">
    <property type="entry name" value="ADENINE PHOSPHORIBOSYLTRANSFERASE"/>
    <property type="match status" value="1"/>
</dbReference>
<dbReference type="PANTHER" id="PTHR32315:SF4">
    <property type="entry name" value="URACIL PHOSPHORIBOSYLTRANSFERASE, CHLOROPLASTIC"/>
    <property type="match status" value="1"/>
</dbReference>
<dbReference type="Pfam" id="PF14681">
    <property type="entry name" value="UPRTase"/>
    <property type="match status" value="1"/>
</dbReference>
<dbReference type="SUPFAM" id="SSF53271">
    <property type="entry name" value="PRTase-like"/>
    <property type="match status" value="1"/>
</dbReference>